<comment type="function">
    <text evidence="1 2 3 6">Guanine nucleotide-binding proteins (G proteins) are involved as a modulator or transducer in various transmembrane signaling systems. The beta and gamma chains are required for the GTPase activity, for replacement of GDP by GTP, and for G protein-effector interaction (By similarity). Required for normal chemotaxis in response to cAMP and for aggregation during scorocarp development.</text>
</comment>
<comment type="subunit">
    <text evidence="5">G proteins are composed of 3 units, alpha, beta and gamma. Interacts with gpgA, and this requires phlp1.</text>
</comment>
<comment type="subcellular location">
    <subcellularLocation>
        <location evidence="4 5">Cytoplasm</location>
    </subcellularLocation>
    <subcellularLocation>
        <location evidence="2 3 4 5">Cell membrane</location>
    </subcellularLocation>
    <text evidence="2">Membrane-associated protein is concentrated at the anterior of polarized cells.</text>
</comment>
<comment type="developmental stage">
    <text evidence="3 6">Expressed throughout development. Expression rises within 6 hours after the initiation of development and gradually decreases following the mound stage. Expressed in vegetative cells.</text>
</comment>
<comment type="similarity">
    <text evidence="7">Belongs to the WD repeat G protein beta family.</text>
</comment>
<keyword id="KW-1003">Cell membrane</keyword>
<keyword id="KW-0145">Chemotaxis</keyword>
<keyword id="KW-0963">Cytoplasm</keyword>
<keyword id="KW-0472">Membrane</keyword>
<keyword id="KW-1185">Reference proteome</keyword>
<keyword id="KW-0677">Repeat</keyword>
<keyword id="KW-0716">Sensory transduction</keyword>
<keyword id="KW-0807">Transducer</keyword>
<keyword id="KW-0853">WD repeat</keyword>
<gene>
    <name type="primary">gpbA</name>
    <name type="ORF">DDB_G0277143</name>
</gene>
<dbReference type="EMBL" id="X73641">
    <property type="protein sequence ID" value="CAA52018.1"/>
    <property type="molecule type" value="mRNA"/>
</dbReference>
<dbReference type="EMBL" id="AAFI02000019">
    <property type="protein sequence ID" value="EAL68757.1"/>
    <property type="molecule type" value="Genomic_DNA"/>
</dbReference>
<dbReference type="PIR" id="A47370">
    <property type="entry name" value="A47370"/>
</dbReference>
<dbReference type="RefSeq" id="XP_642759.1">
    <property type="nucleotide sequence ID" value="XM_637667.1"/>
</dbReference>
<dbReference type="SMR" id="P36408"/>
<dbReference type="FunCoup" id="P36408">
    <property type="interactions" value="305"/>
</dbReference>
<dbReference type="IntAct" id="P36408">
    <property type="interactions" value="1"/>
</dbReference>
<dbReference type="STRING" id="44689.P36408"/>
<dbReference type="PaxDb" id="44689-DDB0252679"/>
<dbReference type="EnsemblProtists" id="EAL68757">
    <property type="protein sequence ID" value="EAL68757"/>
    <property type="gene ID" value="DDB_G0277143"/>
</dbReference>
<dbReference type="GeneID" id="8620948"/>
<dbReference type="KEGG" id="ddi:DDB_G0277143"/>
<dbReference type="dictyBase" id="DDB_G0277143">
    <property type="gene designation" value="gpbA"/>
</dbReference>
<dbReference type="VEuPathDB" id="AmoebaDB:DDB_G0277143"/>
<dbReference type="eggNOG" id="KOG0286">
    <property type="taxonomic scope" value="Eukaryota"/>
</dbReference>
<dbReference type="HOGENOM" id="CLU_000288_57_34_1"/>
<dbReference type="InParanoid" id="P36408"/>
<dbReference type="OMA" id="PLDSQWV"/>
<dbReference type="PhylomeDB" id="P36408"/>
<dbReference type="Reactome" id="R-DDI-392451">
    <property type="pathway name" value="G beta:gamma signalling through PI3Kgamma"/>
</dbReference>
<dbReference type="Reactome" id="R-DDI-418594">
    <property type="pathway name" value="G alpha (i) signalling events"/>
</dbReference>
<dbReference type="Reactome" id="R-DDI-6814122">
    <property type="pathway name" value="Cooperation of PDCL (PhLP1) and TRiC/CCT in G-protein beta folding"/>
</dbReference>
<dbReference type="PRO" id="PR:P36408"/>
<dbReference type="Proteomes" id="UP000002195">
    <property type="component" value="Chromosome 2"/>
</dbReference>
<dbReference type="GO" id="GO:0005737">
    <property type="term" value="C:cytoplasm"/>
    <property type="evidence" value="ECO:0000318"/>
    <property type="project" value="GO_Central"/>
</dbReference>
<dbReference type="GO" id="GO:0005829">
    <property type="term" value="C:cytosol"/>
    <property type="evidence" value="ECO:0000314"/>
    <property type="project" value="dictyBase"/>
</dbReference>
<dbReference type="GO" id="GO:0005834">
    <property type="term" value="C:heterotrimeric G-protein complex"/>
    <property type="evidence" value="ECO:0000314"/>
    <property type="project" value="dictyBase"/>
</dbReference>
<dbReference type="GO" id="GO:0045335">
    <property type="term" value="C:phagocytic vesicle"/>
    <property type="evidence" value="ECO:0007005"/>
    <property type="project" value="dictyBase"/>
</dbReference>
<dbReference type="GO" id="GO:0005886">
    <property type="term" value="C:plasma membrane"/>
    <property type="evidence" value="ECO:0000314"/>
    <property type="project" value="dictyBase"/>
</dbReference>
<dbReference type="GO" id="GO:0031982">
    <property type="term" value="C:vesicle"/>
    <property type="evidence" value="ECO:0000314"/>
    <property type="project" value="dictyBase"/>
</dbReference>
<dbReference type="GO" id="GO:0008047">
    <property type="term" value="F:enzyme activator activity"/>
    <property type="evidence" value="ECO:0000304"/>
    <property type="project" value="dictyBase"/>
</dbReference>
<dbReference type="GO" id="GO:0001965">
    <property type="term" value="F:G-protein alpha-subunit binding"/>
    <property type="evidence" value="ECO:0000314"/>
    <property type="project" value="dictyBase"/>
</dbReference>
<dbReference type="GO" id="GO:0031682">
    <property type="term" value="F:G-protein gamma-subunit binding"/>
    <property type="evidence" value="ECO:0000353"/>
    <property type="project" value="dictyBase"/>
</dbReference>
<dbReference type="GO" id="GO:0019887">
    <property type="term" value="F:protein kinase regulator activity"/>
    <property type="evidence" value="ECO:0000314"/>
    <property type="project" value="dictyBase"/>
</dbReference>
<dbReference type="GO" id="GO:0030159">
    <property type="term" value="F:signaling receptor complex adaptor activity"/>
    <property type="evidence" value="ECO:0000318"/>
    <property type="project" value="GO_Central"/>
</dbReference>
<dbReference type="GO" id="GO:0140582">
    <property type="term" value="P:adenylate cyclase-activating G protein-coupled cAMP receptor signaling pathway"/>
    <property type="evidence" value="ECO:0000315"/>
    <property type="project" value="dictyBase"/>
</dbReference>
<dbReference type="GO" id="GO:0007188">
    <property type="term" value="P:adenylate cyclase-modulating G protein-coupled receptor signaling pathway"/>
    <property type="evidence" value="ECO:0000314"/>
    <property type="project" value="dictyBase"/>
</dbReference>
<dbReference type="GO" id="GO:0031152">
    <property type="term" value="P:aggregation involved in sorocarp development"/>
    <property type="evidence" value="ECO:0000315"/>
    <property type="project" value="dictyBase"/>
</dbReference>
<dbReference type="GO" id="GO:0043327">
    <property type="term" value="P:chemotaxis to cAMP"/>
    <property type="evidence" value="ECO:0000315"/>
    <property type="project" value="dictyBase"/>
</dbReference>
<dbReference type="GO" id="GO:0043326">
    <property type="term" value="P:chemotaxis to folate"/>
    <property type="evidence" value="ECO:0000315"/>
    <property type="project" value="dictyBase"/>
</dbReference>
<dbReference type="GO" id="GO:0030866">
    <property type="term" value="P:cortical actin cytoskeleton organization"/>
    <property type="evidence" value="ECO:0000315"/>
    <property type="project" value="dictyBase"/>
</dbReference>
<dbReference type="GO" id="GO:0140986">
    <property type="term" value="P:G protein-coupled chemorepellent receptor signaling pathway"/>
    <property type="evidence" value="ECO:0000315"/>
    <property type="project" value="dictyBase"/>
</dbReference>
<dbReference type="GO" id="GO:0007186">
    <property type="term" value="P:G protein-coupled receptor signaling pathway"/>
    <property type="evidence" value="ECO:0000318"/>
    <property type="project" value="GO_Central"/>
</dbReference>
<dbReference type="GO" id="GO:0000165">
    <property type="term" value="P:MAPK cascade"/>
    <property type="evidence" value="ECO:0000315"/>
    <property type="project" value="dictyBase"/>
</dbReference>
<dbReference type="GO" id="GO:1903665">
    <property type="term" value="P:negative regulation of asexual reproduction"/>
    <property type="evidence" value="ECO:0000315"/>
    <property type="project" value="dictyBase"/>
</dbReference>
<dbReference type="GO" id="GO:0006909">
    <property type="term" value="P:phagocytosis"/>
    <property type="evidence" value="ECO:0000315"/>
    <property type="project" value="dictyBase"/>
</dbReference>
<dbReference type="GO" id="GO:0030838">
    <property type="term" value="P:positive regulation of actin filament polymerization"/>
    <property type="evidence" value="ECO:0000315"/>
    <property type="project" value="dictyBase"/>
</dbReference>
<dbReference type="GO" id="GO:0046579">
    <property type="term" value="P:positive regulation of Ras protein signal transduction"/>
    <property type="evidence" value="ECO:0000315"/>
    <property type="project" value="dictyBase"/>
</dbReference>
<dbReference type="GO" id="GO:1905301">
    <property type="term" value="P:regulation of macropinocytosis"/>
    <property type="evidence" value="ECO:0000315"/>
    <property type="project" value="dictyBase"/>
</dbReference>
<dbReference type="GO" id="GO:1902610">
    <property type="term" value="P:response to N-phenylthiourea"/>
    <property type="evidence" value="ECO:0000315"/>
    <property type="project" value="dictyBase"/>
</dbReference>
<dbReference type="CDD" id="cd00200">
    <property type="entry name" value="WD40"/>
    <property type="match status" value="1"/>
</dbReference>
<dbReference type="FunFam" id="2.130.10.10:FF:000020">
    <property type="entry name" value="Guanine nucleotide-binding protein beta subunit"/>
    <property type="match status" value="1"/>
</dbReference>
<dbReference type="Gene3D" id="2.130.10.10">
    <property type="entry name" value="YVTN repeat-like/Quinoprotein amine dehydrogenase"/>
    <property type="match status" value="1"/>
</dbReference>
<dbReference type="InterPro" id="IPR020472">
    <property type="entry name" value="G-protein_beta_WD-40_rep"/>
</dbReference>
<dbReference type="InterPro" id="IPR001632">
    <property type="entry name" value="Gprotein_B"/>
</dbReference>
<dbReference type="InterPro" id="IPR016346">
    <property type="entry name" value="Guanine_nucleotide-bd_bsu"/>
</dbReference>
<dbReference type="InterPro" id="IPR015943">
    <property type="entry name" value="WD40/YVTN_repeat-like_dom_sf"/>
</dbReference>
<dbReference type="InterPro" id="IPR019775">
    <property type="entry name" value="WD40_repeat_CS"/>
</dbReference>
<dbReference type="InterPro" id="IPR036322">
    <property type="entry name" value="WD40_repeat_dom_sf"/>
</dbReference>
<dbReference type="InterPro" id="IPR001680">
    <property type="entry name" value="WD40_rpt"/>
</dbReference>
<dbReference type="PANTHER" id="PTHR19850">
    <property type="entry name" value="GUANINE NUCLEOTIDE-BINDING PROTEIN BETA G PROTEIN BETA"/>
    <property type="match status" value="1"/>
</dbReference>
<dbReference type="Pfam" id="PF25391">
    <property type="entry name" value="WD40_Gbeta"/>
    <property type="match status" value="1"/>
</dbReference>
<dbReference type="PIRSF" id="PIRSF002394">
    <property type="entry name" value="GN-bd_beta"/>
    <property type="match status" value="1"/>
</dbReference>
<dbReference type="PRINTS" id="PR00319">
    <property type="entry name" value="GPROTEINB"/>
</dbReference>
<dbReference type="PRINTS" id="PR00320">
    <property type="entry name" value="GPROTEINBRPT"/>
</dbReference>
<dbReference type="SMART" id="SM00320">
    <property type="entry name" value="WD40"/>
    <property type="match status" value="7"/>
</dbReference>
<dbReference type="SUPFAM" id="SSF50978">
    <property type="entry name" value="WD40 repeat-like"/>
    <property type="match status" value="1"/>
</dbReference>
<dbReference type="PROSITE" id="PS00678">
    <property type="entry name" value="WD_REPEATS_1"/>
    <property type="match status" value="3"/>
</dbReference>
<dbReference type="PROSITE" id="PS50082">
    <property type="entry name" value="WD_REPEATS_2"/>
    <property type="match status" value="6"/>
</dbReference>
<dbReference type="PROSITE" id="PS50294">
    <property type="entry name" value="WD_REPEATS_REGION"/>
    <property type="match status" value="1"/>
</dbReference>
<protein>
    <recommendedName>
        <fullName>Guanine nucleotide-binding protein subunit beta</fullName>
    </recommendedName>
</protein>
<proteinExistence type="evidence at protein level"/>
<reference key="1">
    <citation type="journal article" date="1993" name="Genes Dev.">
        <title>A G-protein beta-subunit is essential for Dictyostelium development.</title>
        <authorList>
            <person name="Lilly P."/>
            <person name="Wu L."/>
            <person name="Welker D.L."/>
            <person name="Devreotes P.N."/>
        </authorList>
    </citation>
    <scope>NUCLEOTIDE SEQUENCE [MRNA]</scope>
    <scope>FUNCTION</scope>
    <scope>DEVELOPMENTAL STAGE</scope>
</reference>
<reference key="2">
    <citation type="journal article" date="2002" name="Nature">
        <title>Sequence and analysis of chromosome 2 of Dictyostelium discoideum.</title>
        <authorList>
            <person name="Gloeckner G."/>
            <person name="Eichinger L."/>
            <person name="Szafranski K."/>
            <person name="Pachebat J.A."/>
            <person name="Bankier A.T."/>
            <person name="Dear P.H."/>
            <person name="Lehmann R."/>
            <person name="Baumgart C."/>
            <person name="Parra G."/>
            <person name="Abril J.F."/>
            <person name="Guigo R."/>
            <person name="Kumpf K."/>
            <person name="Tunggal B."/>
            <person name="Cox E.C."/>
            <person name="Quail M.A."/>
            <person name="Platzer M."/>
            <person name="Rosenthal A."/>
            <person name="Noegel A.A."/>
        </authorList>
    </citation>
    <scope>NUCLEOTIDE SEQUENCE [LARGE SCALE GENOMIC DNA]</scope>
    <source>
        <strain>AX4</strain>
    </source>
</reference>
<reference key="3">
    <citation type="journal article" date="2005" name="Nature">
        <title>The genome of the social amoeba Dictyostelium discoideum.</title>
        <authorList>
            <person name="Eichinger L."/>
            <person name="Pachebat J.A."/>
            <person name="Gloeckner G."/>
            <person name="Rajandream M.A."/>
            <person name="Sucgang R."/>
            <person name="Berriman M."/>
            <person name="Song J."/>
            <person name="Olsen R."/>
            <person name="Szafranski K."/>
            <person name="Xu Q."/>
            <person name="Tunggal B."/>
            <person name="Kummerfeld S."/>
            <person name="Madera M."/>
            <person name="Konfortov B.A."/>
            <person name="Rivero F."/>
            <person name="Bankier A.T."/>
            <person name="Lehmann R."/>
            <person name="Hamlin N."/>
            <person name="Davies R."/>
            <person name="Gaudet P."/>
            <person name="Fey P."/>
            <person name="Pilcher K."/>
            <person name="Chen G."/>
            <person name="Saunders D."/>
            <person name="Sodergren E.J."/>
            <person name="Davis P."/>
            <person name="Kerhornou A."/>
            <person name="Nie X."/>
            <person name="Hall N."/>
            <person name="Anjard C."/>
            <person name="Hemphill L."/>
            <person name="Bason N."/>
            <person name="Farbrother P."/>
            <person name="Desany B."/>
            <person name="Just E."/>
            <person name="Morio T."/>
            <person name="Rost R."/>
            <person name="Churcher C.M."/>
            <person name="Cooper J."/>
            <person name="Haydock S."/>
            <person name="van Driessche N."/>
            <person name="Cronin A."/>
            <person name="Goodhead I."/>
            <person name="Muzny D.M."/>
            <person name="Mourier T."/>
            <person name="Pain A."/>
            <person name="Lu M."/>
            <person name="Harper D."/>
            <person name="Lindsay R."/>
            <person name="Hauser H."/>
            <person name="James K.D."/>
            <person name="Quiles M."/>
            <person name="Madan Babu M."/>
            <person name="Saito T."/>
            <person name="Buchrieser C."/>
            <person name="Wardroper A."/>
            <person name="Felder M."/>
            <person name="Thangavelu M."/>
            <person name="Johnson D."/>
            <person name="Knights A."/>
            <person name="Loulseged H."/>
            <person name="Mungall K.L."/>
            <person name="Oliver K."/>
            <person name="Price C."/>
            <person name="Quail M.A."/>
            <person name="Urushihara H."/>
            <person name="Hernandez J."/>
            <person name="Rabbinowitsch E."/>
            <person name="Steffen D."/>
            <person name="Sanders M."/>
            <person name="Ma J."/>
            <person name="Kohara Y."/>
            <person name="Sharp S."/>
            <person name="Simmonds M.N."/>
            <person name="Spiegler S."/>
            <person name="Tivey A."/>
            <person name="Sugano S."/>
            <person name="White B."/>
            <person name="Walker D."/>
            <person name="Woodward J.R."/>
            <person name="Winckler T."/>
            <person name="Tanaka Y."/>
            <person name="Shaulsky G."/>
            <person name="Schleicher M."/>
            <person name="Weinstock G.M."/>
            <person name="Rosenthal A."/>
            <person name="Cox E.C."/>
            <person name="Chisholm R.L."/>
            <person name="Gibbs R.A."/>
            <person name="Loomis W.F."/>
            <person name="Platzer M."/>
            <person name="Kay R.R."/>
            <person name="Williams J.G."/>
            <person name="Dear P.H."/>
            <person name="Noegel A.A."/>
            <person name="Barrell B.G."/>
            <person name="Kuspa A."/>
        </authorList>
    </citation>
    <scope>NUCLEOTIDE SEQUENCE [LARGE SCALE GENOMIC DNA]</scope>
    <source>
        <strain>AX4</strain>
    </source>
</reference>
<reference key="4">
    <citation type="journal article" date="2000" name="Science">
        <title>Localization of the G protein betagamma complex in living cells during chemotaxis.</title>
        <authorList>
            <person name="Jin T."/>
            <person name="Zhang N."/>
            <person name="Long Y."/>
            <person name="Parent C.A."/>
            <person name="Devreotes P.N."/>
        </authorList>
    </citation>
    <scope>FUNCTION</scope>
    <scope>SUBCELLULAR LOCATION</scope>
</reference>
<reference key="5">
    <citation type="journal article" date="2001" name="Mol. Biol. Cell">
        <title>Ggamma in dictyostelium: its role in localization of gbetagamma to the membrane is required for chemotaxis in shallow gradients.</title>
        <authorList>
            <person name="Zhang N."/>
            <person name="Long Y."/>
            <person name="Devreotes P.N."/>
        </authorList>
    </citation>
    <scope>FUNCTION</scope>
    <scope>SUBCELLULAR LOCATION</scope>
    <scope>DEVELOPMENTAL STAGE</scope>
</reference>
<reference key="6">
    <citation type="journal article" date="2003" name="EMBO J.">
        <title>Phosducin-like proteins in Dictyostelium discoideum: implications for the phosducin family of proteins.</title>
        <authorList>
            <person name="Blaauw M."/>
            <person name="Knol J.C."/>
            <person name="Kortholt A."/>
            <person name="Roelofs J."/>
            <person name="Ruchira X."/>
            <person name="Postma M."/>
            <person name="Visser A.J.W.G."/>
            <person name="van Haastert P.J.M."/>
        </authorList>
    </citation>
    <scope>SUBCELLULAR LOCATION</scope>
</reference>
<reference key="7">
    <citation type="journal article" date="2005" name="Mol. Cell. Biol.">
        <title>The phosducin-like protein PhLP1 is essential for Gbetagamma dimer formation in Dictyostelium discoideum.</title>
        <authorList>
            <person name="Knol J.C."/>
            <person name="Engel R."/>
            <person name="Blaauw M."/>
            <person name="Visser A.J.W.G."/>
            <person name="van Haastert P.J.M."/>
        </authorList>
    </citation>
    <scope>INTERACTION WITH GPGA</scope>
    <scope>SUBCELLULAR LOCATION</scope>
</reference>
<reference key="8">
    <citation type="journal article" date="2006" name="Mol. Cell. Proteomics">
        <title>Proteomics fingerprinting of phagosome maturation and evidence for the role of a Galpha during uptake.</title>
        <authorList>
            <person name="Gotthardt D."/>
            <person name="Blancheteau V."/>
            <person name="Bosserhoff A."/>
            <person name="Ruppert T."/>
            <person name="Delorenzi M."/>
            <person name="Soldati T."/>
        </authorList>
    </citation>
    <scope>IDENTIFICATION BY MASS SPECTROMETRY [LARGE SCALE ANALYSIS]</scope>
    <source>
        <strain>AX2</strain>
    </source>
</reference>
<accession>P36408</accession>
<accession>Q54ZV7</accession>
<name>GBB_DICDI</name>
<feature type="chain" id="PRO_0000127714" description="Guanine nucleotide-binding protein subunit beta">
    <location>
        <begin position="1"/>
        <end position="347"/>
    </location>
</feature>
<feature type="repeat" description="WD 1">
    <location>
        <begin position="60"/>
        <end position="90"/>
    </location>
</feature>
<feature type="repeat" description="WD 2">
    <location>
        <begin position="102"/>
        <end position="132"/>
    </location>
</feature>
<feature type="repeat" description="WD 3">
    <location>
        <begin position="148"/>
        <end position="177"/>
    </location>
</feature>
<feature type="repeat" description="WD 4">
    <location>
        <begin position="189"/>
        <end position="219"/>
    </location>
</feature>
<feature type="repeat" description="WD 5">
    <location>
        <begin position="231"/>
        <end position="261"/>
    </location>
</feature>
<feature type="repeat" description="WD 6">
    <location>
        <begin position="275"/>
        <end position="305"/>
    </location>
</feature>
<feature type="repeat" description="WD 7">
    <location>
        <begin position="317"/>
        <end position="347"/>
    </location>
</feature>
<sequence length="347" mass="38623">MSSDISEKIQQARRDAESMKEQIRANRDVMNDTTLKTFTRDLPGLPKMEGKIKVRRNLKGHLAKIYAMHWAEDNVHLVSASQDGKLLVWDGLTTNKVHAIPLRSSWVMTCAYSPTANFVACGGLDNICSIYNLRSREQPIRVCRELNSHTGYLSCCRFLNDRQIVTSSGDMTCILWDVENGTKITEFSDHNGDVMSVSVSPDKNYFISGACDATAKLWDLRSGKCVQTFTGHEADINAVQYFPNGLSFGTGSDDASCRLFDIRADRELMQYTHDNILCGITSVGFSFSGRFLFAGYDDFTCNVWDTLKGERVLSLTGHGNRVSCLGVPTDGMALCTGSWDSLLKIWA</sequence>
<evidence type="ECO:0000250" key="1"/>
<evidence type="ECO:0000269" key="2">
    <source>
    </source>
</evidence>
<evidence type="ECO:0000269" key="3">
    <source>
    </source>
</evidence>
<evidence type="ECO:0000269" key="4">
    <source>
    </source>
</evidence>
<evidence type="ECO:0000269" key="5">
    <source>
    </source>
</evidence>
<evidence type="ECO:0000269" key="6">
    <source>
    </source>
</evidence>
<evidence type="ECO:0000305" key="7"/>
<organism>
    <name type="scientific">Dictyostelium discoideum</name>
    <name type="common">Social amoeba</name>
    <dbReference type="NCBI Taxonomy" id="44689"/>
    <lineage>
        <taxon>Eukaryota</taxon>
        <taxon>Amoebozoa</taxon>
        <taxon>Evosea</taxon>
        <taxon>Eumycetozoa</taxon>
        <taxon>Dictyostelia</taxon>
        <taxon>Dictyosteliales</taxon>
        <taxon>Dictyosteliaceae</taxon>
        <taxon>Dictyostelium</taxon>
    </lineage>
</organism>